<organism>
    <name type="scientific">Escherichia coli O81 (strain ED1a)</name>
    <dbReference type="NCBI Taxonomy" id="585397"/>
    <lineage>
        <taxon>Bacteria</taxon>
        <taxon>Pseudomonadati</taxon>
        <taxon>Pseudomonadota</taxon>
        <taxon>Gammaproteobacteria</taxon>
        <taxon>Enterobacterales</taxon>
        <taxon>Enterobacteriaceae</taxon>
        <taxon>Escherichia</taxon>
    </lineage>
</organism>
<gene>
    <name evidence="1" type="primary">gpmA</name>
    <name type="ordered locus">ECED1_0716</name>
</gene>
<feature type="chain" id="PRO_1000149513" description="2,3-bisphosphoglycerate-dependent phosphoglycerate mutase">
    <location>
        <begin position="1"/>
        <end position="250"/>
    </location>
</feature>
<feature type="active site" description="Tele-phosphohistidine intermediate" evidence="1">
    <location>
        <position position="11"/>
    </location>
</feature>
<feature type="active site" description="Proton donor/acceptor" evidence="1">
    <location>
        <position position="89"/>
    </location>
</feature>
<feature type="binding site" evidence="1">
    <location>
        <begin position="10"/>
        <end position="17"/>
    </location>
    <ligand>
        <name>substrate</name>
    </ligand>
</feature>
<feature type="binding site" evidence="1">
    <location>
        <begin position="23"/>
        <end position="24"/>
    </location>
    <ligand>
        <name>substrate</name>
    </ligand>
</feature>
<feature type="binding site" evidence="1">
    <location>
        <position position="62"/>
    </location>
    <ligand>
        <name>substrate</name>
    </ligand>
</feature>
<feature type="binding site" evidence="1">
    <location>
        <begin position="89"/>
        <end position="92"/>
    </location>
    <ligand>
        <name>substrate</name>
    </ligand>
</feature>
<feature type="binding site" evidence="1">
    <location>
        <position position="100"/>
    </location>
    <ligand>
        <name>substrate</name>
    </ligand>
</feature>
<feature type="binding site" evidence="1">
    <location>
        <begin position="116"/>
        <end position="117"/>
    </location>
    <ligand>
        <name>substrate</name>
    </ligand>
</feature>
<feature type="binding site" evidence="1">
    <location>
        <begin position="185"/>
        <end position="186"/>
    </location>
    <ligand>
        <name>substrate</name>
    </ligand>
</feature>
<feature type="site" description="Transition state stabilizer" evidence="1">
    <location>
        <position position="184"/>
    </location>
</feature>
<reference key="1">
    <citation type="journal article" date="2009" name="PLoS Genet.">
        <title>Organised genome dynamics in the Escherichia coli species results in highly diverse adaptive paths.</title>
        <authorList>
            <person name="Touchon M."/>
            <person name="Hoede C."/>
            <person name="Tenaillon O."/>
            <person name="Barbe V."/>
            <person name="Baeriswyl S."/>
            <person name="Bidet P."/>
            <person name="Bingen E."/>
            <person name="Bonacorsi S."/>
            <person name="Bouchier C."/>
            <person name="Bouvet O."/>
            <person name="Calteau A."/>
            <person name="Chiapello H."/>
            <person name="Clermont O."/>
            <person name="Cruveiller S."/>
            <person name="Danchin A."/>
            <person name="Diard M."/>
            <person name="Dossat C."/>
            <person name="Karoui M.E."/>
            <person name="Frapy E."/>
            <person name="Garry L."/>
            <person name="Ghigo J.M."/>
            <person name="Gilles A.M."/>
            <person name="Johnson J."/>
            <person name="Le Bouguenec C."/>
            <person name="Lescat M."/>
            <person name="Mangenot S."/>
            <person name="Martinez-Jehanne V."/>
            <person name="Matic I."/>
            <person name="Nassif X."/>
            <person name="Oztas S."/>
            <person name="Petit M.A."/>
            <person name="Pichon C."/>
            <person name="Rouy Z."/>
            <person name="Ruf C.S."/>
            <person name="Schneider D."/>
            <person name="Tourret J."/>
            <person name="Vacherie B."/>
            <person name="Vallenet D."/>
            <person name="Medigue C."/>
            <person name="Rocha E.P.C."/>
            <person name="Denamur E."/>
        </authorList>
    </citation>
    <scope>NUCLEOTIDE SEQUENCE [LARGE SCALE GENOMIC DNA]</scope>
    <source>
        <strain>ED1a</strain>
    </source>
</reference>
<comment type="function">
    <text evidence="1">Catalyzes the interconversion of 2-phosphoglycerate and 3-phosphoglycerate.</text>
</comment>
<comment type="catalytic activity">
    <reaction evidence="1">
        <text>(2R)-2-phosphoglycerate = (2R)-3-phosphoglycerate</text>
        <dbReference type="Rhea" id="RHEA:15901"/>
        <dbReference type="ChEBI" id="CHEBI:58272"/>
        <dbReference type="ChEBI" id="CHEBI:58289"/>
        <dbReference type="EC" id="5.4.2.11"/>
    </reaction>
</comment>
<comment type="pathway">
    <text evidence="1">Carbohydrate degradation; glycolysis; pyruvate from D-glyceraldehyde 3-phosphate: step 3/5.</text>
</comment>
<comment type="subunit">
    <text evidence="1">Homodimer.</text>
</comment>
<comment type="similarity">
    <text evidence="1">Belongs to the phosphoglycerate mutase family. BPG-dependent PGAM subfamily.</text>
</comment>
<protein>
    <recommendedName>
        <fullName evidence="1">2,3-bisphosphoglycerate-dependent phosphoglycerate mutase</fullName>
        <shortName evidence="1">BPG-dependent PGAM</shortName>
        <shortName evidence="1">PGAM</shortName>
        <shortName evidence="1">Phosphoglyceromutase</shortName>
        <shortName evidence="1">dPGM</shortName>
        <ecNumber evidence="1">5.4.2.11</ecNumber>
    </recommendedName>
</protein>
<evidence type="ECO:0000255" key="1">
    <source>
        <dbReference type="HAMAP-Rule" id="MF_01039"/>
    </source>
</evidence>
<sequence>MAVTKLVLVRHGESQWNKENRFTGWYDVDLSEKGVSEAKAAGKLLKEEGYSFDFAYTSVLKRAIHTLWNVLDELDQAWLPVEKSWKLNERHYGALQGLNKAETAEKYGDEQVKQWRRGFAVTPPELTKDDERYPGHDPRYAKLSEKELPLTESLALTIDRVIPYWNETILPRMKSGERVIIAAHGNSLRALVKYLDNMSEEEILELNIPTGVPLVYEFDENFKPLKRYYLGNADEIAAKAAAVANQGKAK</sequence>
<keyword id="KW-0312">Gluconeogenesis</keyword>
<keyword id="KW-0324">Glycolysis</keyword>
<keyword id="KW-0413">Isomerase</keyword>
<name>GPMA_ECO81</name>
<accession>B7MPN9</accession>
<proteinExistence type="inferred from homology"/>
<dbReference type="EC" id="5.4.2.11" evidence="1"/>
<dbReference type="EMBL" id="CU928162">
    <property type="protein sequence ID" value="CAR06921.1"/>
    <property type="molecule type" value="Genomic_DNA"/>
</dbReference>
<dbReference type="RefSeq" id="WP_001295305.1">
    <property type="nucleotide sequence ID" value="NC_011745.1"/>
</dbReference>
<dbReference type="SMR" id="B7MPN9"/>
<dbReference type="GeneID" id="93776726"/>
<dbReference type="KEGG" id="ecq:ECED1_0716"/>
<dbReference type="HOGENOM" id="CLU_033323_1_1_6"/>
<dbReference type="UniPathway" id="UPA00109">
    <property type="reaction ID" value="UER00186"/>
</dbReference>
<dbReference type="Proteomes" id="UP000000748">
    <property type="component" value="Chromosome"/>
</dbReference>
<dbReference type="GO" id="GO:0004619">
    <property type="term" value="F:phosphoglycerate mutase activity"/>
    <property type="evidence" value="ECO:0007669"/>
    <property type="project" value="UniProtKB-EC"/>
</dbReference>
<dbReference type="GO" id="GO:0006094">
    <property type="term" value="P:gluconeogenesis"/>
    <property type="evidence" value="ECO:0007669"/>
    <property type="project" value="UniProtKB-UniRule"/>
</dbReference>
<dbReference type="GO" id="GO:0006096">
    <property type="term" value="P:glycolytic process"/>
    <property type="evidence" value="ECO:0007669"/>
    <property type="project" value="UniProtKB-UniRule"/>
</dbReference>
<dbReference type="CDD" id="cd07067">
    <property type="entry name" value="HP_PGM_like"/>
    <property type="match status" value="1"/>
</dbReference>
<dbReference type="FunFam" id="3.40.50.1240:FF:000003">
    <property type="entry name" value="2,3-bisphosphoglycerate-dependent phosphoglycerate mutase"/>
    <property type="match status" value="1"/>
</dbReference>
<dbReference type="Gene3D" id="3.40.50.1240">
    <property type="entry name" value="Phosphoglycerate mutase-like"/>
    <property type="match status" value="1"/>
</dbReference>
<dbReference type="HAMAP" id="MF_01039">
    <property type="entry name" value="PGAM_GpmA"/>
    <property type="match status" value="1"/>
</dbReference>
<dbReference type="InterPro" id="IPR013078">
    <property type="entry name" value="His_Pase_superF_clade-1"/>
</dbReference>
<dbReference type="InterPro" id="IPR029033">
    <property type="entry name" value="His_PPase_superfam"/>
</dbReference>
<dbReference type="InterPro" id="IPR001345">
    <property type="entry name" value="PG/BPGM_mutase_AS"/>
</dbReference>
<dbReference type="InterPro" id="IPR005952">
    <property type="entry name" value="Phosphogly_mut1"/>
</dbReference>
<dbReference type="NCBIfam" id="TIGR01258">
    <property type="entry name" value="pgm_1"/>
    <property type="match status" value="1"/>
</dbReference>
<dbReference type="NCBIfam" id="NF010713">
    <property type="entry name" value="PRK14115.1"/>
    <property type="match status" value="1"/>
</dbReference>
<dbReference type="PANTHER" id="PTHR11931">
    <property type="entry name" value="PHOSPHOGLYCERATE MUTASE"/>
    <property type="match status" value="1"/>
</dbReference>
<dbReference type="Pfam" id="PF00300">
    <property type="entry name" value="His_Phos_1"/>
    <property type="match status" value="1"/>
</dbReference>
<dbReference type="PIRSF" id="PIRSF000709">
    <property type="entry name" value="6PFK_2-Ptase"/>
    <property type="match status" value="1"/>
</dbReference>
<dbReference type="SMART" id="SM00855">
    <property type="entry name" value="PGAM"/>
    <property type="match status" value="1"/>
</dbReference>
<dbReference type="SUPFAM" id="SSF53254">
    <property type="entry name" value="Phosphoglycerate mutase-like"/>
    <property type="match status" value="1"/>
</dbReference>
<dbReference type="PROSITE" id="PS00175">
    <property type="entry name" value="PG_MUTASE"/>
    <property type="match status" value="1"/>
</dbReference>